<sequence length="448" mass="49772">MSTMTPAEIVSELDKHIIGQGRAKKAVAVALRNRWRRQQVEEPLRQEITPKNILMIGPTGVGKTEIARRLAKLADAPFIKIEATKFTEVGYVGRDVDSIVRDLIEISVKQTRETEMRKVRTKAEDQAEDRILDILLPSARPVGFGASSGAADTVDEGSTTRQTFRKRLREGLLDDKEVELDVEQPQVGMDIMGPPGMEDMTEQIRSMFANIGGGKKTRRKMKVKEALKALTDEEAARMLNDEEVKTKAVQNVEQNGIVFLDEIDKIASRNEAGGGEVSRQGVQRDLLPLVEGTTINTKYGMVKTDHILFIASGAFHLAKPSDLIPELQGRFPIRVELDSLSVNDFESILVSTDASLVKQYQALLATEDVHLEFADDGIRRLAEIAYAVNEKTENIGARRLYTVIEKLLEEVSFAAGNHSGRTVQIDAAYVDRALNEVAEDEDLSRYVL</sequence>
<organism>
    <name type="scientific">Paraburkholderia xenovorans (strain LB400)</name>
    <dbReference type="NCBI Taxonomy" id="266265"/>
    <lineage>
        <taxon>Bacteria</taxon>
        <taxon>Pseudomonadati</taxon>
        <taxon>Pseudomonadota</taxon>
        <taxon>Betaproteobacteria</taxon>
        <taxon>Burkholderiales</taxon>
        <taxon>Burkholderiaceae</taxon>
        <taxon>Paraburkholderia</taxon>
    </lineage>
</organism>
<reference key="1">
    <citation type="journal article" date="2006" name="Proc. Natl. Acad. Sci. U.S.A.">
        <title>Burkholderia xenovorans LB400 harbors a multi-replicon, 9.73-Mbp genome shaped for versatility.</title>
        <authorList>
            <person name="Chain P.S.G."/>
            <person name="Denef V.J."/>
            <person name="Konstantinidis K.T."/>
            <person name="Vergez L.M."/>
            <person name="Agullo L."/>
            <person name="Reyes V.L."/>
            <person name="Hauser L."/>
            <person name="Cordova M."/>
            <person name="Gomez L."/>
            <person name="Gonzalez M."/>
            <person name="Land M."/>
            <person name="Lao V."/>
            <person name="Larimer F."/>
            <person name="LiPuma J.J."/>
            <person name="Mahenthiralingam E."/>
            <person name="Malfatti S.A."/>
            <person name="Marx C.J."/>
            <person name="Parnell J.J."/>
            <person name="Ramette A."/>
            <person name="Richardson P."/>
            <person name="Seeger M."/>
            <person name="Smith D."/>
            <person name="Spilker T."/>
            <person name="Sul W.J."/>
            <person name="Tsoi T.V."/>
            <person name="Ulrich L.E."/>
            <person name="Zhulin I.B."/>
            <person name="Tiedje J.M."/>
        </authorList>
    </citation>
    <scope>NUCLEOTIDE SEQUENCE [LARGE SCALE GENOMIC DNA]</scope>
    <source>
        <strain>LB400</strain>
    </source>
</reference>
<dbReference type="EMBL" id="CP000270">
    <property type="protein sequence ID" value="ABE28619.1"/>
    <property type="molecule type" value="Genomic_DNA"/>
</dbReference>
<dbReference type="RefSeq" id="WP_011486474.1">
    <property type="nucleotide sequence ID" value="NC_007951.1"/>
</dbReference>
<dbReference type="SMR" id="Q146X0"/>
<dbReference type="STRING" id="266265.Bxe_A4381"/>
<dbReference type="KEGG" id="bxb:DR64_2057"/>
<dbReference type="KEGG" id="bxe:Bxe_A4381"/>
<dbReference type="PATRIC" id="fig|266265.5.peg.85"/>
<dbReference type="eggNOG" id="COG1220">
    <property type="taxonomic scope" value="Bacteria"/>
</dbReference>
<dbReference type="OrthoDB" id="9804062at2"/>
<dbReference type="Proteomes" id="UP000001817">
    <property type="component" value="Chromosome 1"/>
</dbReference>
<dbReference type="GO" id="GO:0009376">
    <property type="term" value="C:HslUV protease complex"/>
    <property type="evidence" value="ECO:0007669"/>
    <property type="project" value="UniProtKB-UniRule"/>
</dbReference>
<dbReference type="GO" id="GO:0005524">
    <property type="term" value="F:ATP binding"/>
    <property type="evidence" value="ECO:0007669"/>
    <property type="project" value="UniProtKB-UniRule"/>
</dbReference>
<dbReference type="GO" id="GO:0016887">
    <property type="term" value="F:ATP hydrolysis activity"/>
    <property type="evidence" value="ECO:0007669"/>
    <property type="project" value="InterPro"/>
</dbReference>
<dbReference type="GO" id="GO:0008233">
    <property type="term" value="F:peptidase activity"/>
    <property type="evidence" value="ECO:0007669"/>
    <property type="project" value="InterPro"/>
</dbReference>
<dbReference type="GO" id="GO:0036402">
    <property type="term" value="F:proteasome-activating activity"/>
    <property type="evidence" value="ECO:0007669"/>
    <property type="project" value="UniProtKB-UniRule"/>
</dbReference>
<dbReference type="GO" id="GO:0043335">
    <property type="term" value="P:protein unfolding"/>
    <property type="evidence" value="ECO:0007669"/>
    <property type="project" value="UniProtKB-UniRule"/>
</dbReference>
<dbReference type="GO" id="GO:0051603">
    <property type="term" value="P:proteolysis involved in protein catabolic process"/>
    <property type="evidence" value="ECO:0007669"/>
    <property type="project" value="TreeGrafter"/>
</dbReference>
<dbReference type="CDD" id="cd19498">
    <property type="entry name" value="RecA-like_HslU"/>
    <property type="match status" value="1"/>
</dbReference>
<dbReference type="FunFam" id="3.40.50.300:FF:000213">
    <property type="entry name" value="ATP-dependent protease ATPase subunit HslU"/>
    <property type="match status" value="1"/>
</dbReference>
<dbReference type="FunFam" id="3.40.50.300:FF:000220">
    <property type="entry name" value="ATP-dependent protease ATPase subunit HslU"/>
    <property type="match status" value="1"/>
</dbReference>
<dbReference type="Gene3D" id="1.10.8.60">
    <property type="match status" value="1"/>
</dbReference>
<dbReference type="Gene3D" id="3.40.50.300">
    <property type="entry name" value="P-loop containing nucleotide triphosphate hydrolases"/>
    <property type="match status" value="2"/>
</dbReference>
<dbReference type="HAMAP" id="MF_00249">
    <property type="entry name" value="HslU"/>
    <property type="match status" value="1"/>
</dbReference>
<dbReference type="InterPro" id="IPR003593">
    <property type="entry name" value="AAA+_ATPase"/>
</dbReference>
<dbReference type="InterPro" id="IPR050052">
    <property type="entry name" value="ATP-dep_Clp_protease_ClpX"/>
</dbReference>
<dbReference type="InterPro" id="IPR003959">
    <property type="entry name" value="ATPase_AAA_core"/>
</dbReference>
<dbReference type="InterPro" id="IPR019489">
    <property type="entry name" value="Clp_ATPase_C"/>
</dbReference>
<dbReference type="InterPro" id="IPR004491">
    <property type="entry name" value="HslU"/>
</dbReference>
<dbReference type="InterPro" id="IPR027417">
    <property type="entry name" value="P-loop_NTPase"/>
</dbReference>
<dbReference type="NCBIfam" id="TIGR00390">
    <property type="entry name" value="hslU"/>
    <property type="match status" value="1"/>
</dbReference>
<dbReference type="NCBIfam" id="NF003544">
    <property type="entry name" value="PRK05201.1"/>
    <property type="match status" value="1"/>
</dbReference>
<dbReference type="PANTHER" id="PTHR48102">
    <property type="entry name" value="ATP-DEPENDENT CLP PROTEASE ATP-BINDING SUBUNIT CLPX-LIKE, MITOCHONDRIAL-RELATED"/>
    <property type="match status" value="1"/>
</dbReference>
<dbReference type="PANTHER" id="PTHR48102:SF3">
    <property type="entry name" value="ATP-DEPENDENT PROTEASE ATPASE SUBUNIT HSLU"/>
    <property type="match status" value="1"/>
</dbReference>
<dbReference type="Pfam" id="PF00004">
    <property type="entry name" value="AAA"/>
    <property type="match status" value="1"/>
</dbReference>
<dbReference type="Pfam" id="PF07724">
    <property type="entry name" value="AAA_2"/>
    <property type="match status" value="1"/>
</dbReference>
<dbReference type="SMART" id="SM00382">
    <property type="entry name" value="AAA"/>
    <property type="match status" value="1"/>
</dbReference>
<dbReference type="SMART" id="SM01086">
    <property type="entry name" value="ClpB_D2-small"/>
    <property type="match status" value="1"/>
</dbReference>
<dbReference type="SUPFAM" id="SSF52540">
    <property type="entry name" value="P-loop containing nucleoside triphosphate hydrolases"/>
    <property type="match status" value="1"/>
</dbReference>
<proteinExistence type="inferred from homology"/>
<feature type="chain" id="PRO_1000012723" description="ATP-dependent protease ATPase subunit HslU">
    <location>
        <begin position="1"/>
        <end position="448"/>
    </location>
</feature>
<feature type="binding site" evidence="1">
    <location>
        <position position="18"/>
    </location>
    <ligand>
        <name>ATP</name>
        <dbReference type="ChEBI" id="CHEBI:30616"/>
    </ligand>
</feature>
<feature type="binding site" evidence="1">
    <location>
        <begin position="60"/>
        <end position="65"/>
    </location>
    <ligand>
        <name>ATP</name>
        <dbReference type="ChEBI" id="CHEBI:30616"/>
    </ligand>
</feature>
<feature type="binding site" evidence="1">
    <location>
        <position position="261"/>
    </location>
    <ligand>
        <name>ATP</name>
        <dbReference type="ChEBI" id="CHEBI:30616"/>
    </ligand>
</feature>
<feature type="binding site" evidence="1">
    <location>
        <position position="326"/>
    </location>
    <ligand>
        <name>ATP</name>
        <dbReference type="ChEBI" id="CHEBI:30616"/>
    </ligand>
</feature>
<feature type="binding site" evidence="1">
    <location>
        <position position="398"/>
    </location>
    <ligand>
        <name>ATP</name>
        <dbReference type="ChEBI" id="CHEBI:30616"/>
    </ligand>
</feature>
<name>HSLU_PARXL</name>
<protein>
    <recommendedName>
        <fullName evidence="1">ATP-dependent protease ATPase subunit HslU</fullName>
    </recommendedName>
    <alternativeName>
        <fullName evidence="1">Unfoldase HslU</fullName>
    </alternativeName>
</protein>
<evidence type="ECO:0000255" key="1">
    <source>
        <dbReference type="HAMAP-Rule" id="MF_00249"/>
    </source>
</evidence>
<comment type="function">
    <text evidence="1">ATPase subunit of a proteasome-like degradation complex; this subunit has chaperone activity. The binding of ATP and its subsequent hydrolysis by HslU are essential for unfolding of protein substrates subsequently hydrolyzed by HslV. HslU recognizes the N-terminal part of its protein substrates and unfolds these before they are guided to HslV for hydrolysis.</text>
</comment>
<comment type="subunit">
    <text evidence="1">A double ring-shaped homohexamer of HslV is capped on each side by a ring-shaped HslU homohexamer. The assembly of the HslU/HslV complex is dependent on binding of ATP.</text>
</comment>
<comment type="subcellular location">
    <subcellularLocation>
        <location evidence="1">Cytoplasm</location>
    </subcellularLocation>
</comment>
<comment type="similarity">
    <text evidence="1">Belongs to the ClpX chaperone family. HslU subfamily.</text>
</comment>
<accession>Q146X0</accession>
<gene>
    <name evidence="1" type="primary">hslU</name>
    <name type="ordered locus">Bxeno_A0081</name>
    <name type="ORF">Bxe_A4381</name>
</gene>
<keyword id="KW-0067">ATP-binding</keyword>
<keyword id="KW-0143">Chaperone</keyword>
<keyword id="KW-0963">Cytoplasm</keyword>
<keyword id="KW-0547">Nucleotide-binding</keyword>
<keyword id="KW-1185">Reference proteome</keyword>
<keyword id="KW-0346">Stress response</keyword>